<protein>
    <recommendedName>
        <fullName>Protein FMC1 homolog</fullName>
    </recommendedName>
    <alternativeName>
        <fullName evidence="4">Formation of mitochondrial complex V assembly factor 1</fullName>
    </alternativeName>
</protein>
<gene>
    <name type="primary">Fmc1</name>
</gene>
<dbReference type="EMBL" id="AK003231">
    <property type="protein sequence ID" value="BAC25025.1"/>
    <property type="molecule type" value="mRNA"/>
</dbReference>
<dbReference type="EMBL" id="AK008291">
    <property type="protein sequence ID" value="BAB25581.1"/>
    <property type="molecule type" value="mRNA"/>
</dbReference>
<dbReference type="EMBL" id="AK009186">
    <property type="protein sequence ID" value="BAB26127.1"/>
    <property type="molecule type" value="mRNA"/>
</dbReference>
<dbReference type="EMBL" id="BC059710">
    <property type="protein sequence ID" value="AAH59710.1"/>
    <property type="molecule type" value="mRNA"/>
</dbReference>
<dbReference type="CCDS" id="CCDS20014.1"/>
<dbReference type="RefSeq" id="NP_079639.1">
    <property type="nucleotide sequence ID" value="NM_025363.3"/>
</dbReference>
<dbReference type="BioGRID" id="211226">
    <property type="interactions" value="4"/>
</dbReference>
<dbReference type="FunCoup" id="Q9CR13">
    <property type="interactions" value="1135"/>
</dbReference>
<dbReference type="STRING" id="10090.ENSMUSP00000019833"/>
<dbReference type="PhosphoSitePlus" id="Q9CR13"/>
<dbReference type="SwissPalm" id="Q9CR13"/>
<dbReference type="PaxDb" id="10090-ENSMUSP00000019833"/>
<dbReference type="PeptideAtlas" id="Q9CR13"/>
<dbReference type="ProteomicsDB" id="267485"/>
<dbReference type="Pumba" id="Q9CR13"/>
<dbReference type="Antibodypedia" id="71139">
    <property type="antibodies" value="8 antibodies from 4 providers"/>
</dbReference>
<dbReference type="DNASU" id="66117"/>
<dbReference type="Ensembl" id="ENSMUST00000019833.5">
    <property type="protein sequence ID" value="ENSMUSP00000019833.5"/>
    <property type="gene ID" value="ENSMUSG00000019689.5"/>
</dbReference>
<dbReference type="GeneID" id="66117"/>
<dbReference type="KEGG" id="mmu:66117"/>
<dbReference type="UCSC" id="uc009bki.1">
    <property type="organism name" value="mouse"/>
</dbReference>
<dbReference type="AGR" id="MGI:1913367"/>
<dbReference type="CTD" id="154791"/>
<dbReference type="MGI" id="MGI:1913367">
    <property type="gene designation" value="Fmc1"/>
</dbReference>
<dbReference type="VEuPathDB" id="HostDB:ENSMUSG00000019689"/>
<dbReference type="eggNOG" id="ENOG502S1MM">
    <property type="taxonomic scope" value="Eukaryota"/>
</dbReference>
<dbReference type="GeneTree" id="ENSGT00390000012258"/>
<dbReference type="HOGENOM" id="CLU_159000_0_0_1"/>
<dbReference type="InParanoid" id="Q9CR13"/>
<dbReference type="OMA" id="HHASLTY"/>
<dbReference type="OrthoDB" id="8039at9989"/>
<dbReference type="PhylomeDB" id="Q9CR13"/>
<dbReference type="TreeFam" id="TF321497"/>
<dbReference type="BioGRID-ORCS" id="66117">
    <property type="hits" value="1 hit in 77 CRISPR screens"/>
</dbReference>
<dbReference type="ChiTaRS" id="Fmc1">
    <property type="organism name" value="mouse"/>
</dbReference>
<dbReference type="PRO" id="PR:Q9CR13"/>
<dbReference type="Proteomes" id="UP000000589">
    <property type="component" value="Chromosome 6"/>
</dbReference>
<dbReference type="RNAct" id="Q9CR13">
    <property type="molecule type" value="protein"/>
</dbReference>
<dbReference type="Bgee" id="ENSMUSG00000019689">
    <property type="expression patterns" value="Expressed in ileal epithelium and 254 other cell types or tissues"/>
</dbReference>
<dbReference type="GO" id="GO:0005739">
    <property type="term" value="C:mitochondrion"/>
    <property type="evidence" value="ECO:0007005"/>
    <property type="project" value="MGI"/>
</dbReference>
<dbReference type="GO" id="GO:0008637">
    <property type="term" value="P:apoptotic mitochondrial changes"/>
    <property type="evidence" value="ECO:0000314"/>
    <property type="project" value="MGI"/>
</dbReference>
<dbReference type="GO" id="GO:0071542">
    <property type="term" value="P:dopaminergic neuron differentiation"/>
    <property type="evidence" value="ECO:0000315"/>
    <property type="project" value="MGI"/>
</dbReference>
<dbReference type="GO" id="GO:0033615">
    <property type="term" value="P:mitochondrial proton-transporting ATP synthase complex assembly"/>
    <property type="evidence" value="ECO:0000250"/>
    <property type="project" value="UniProtKB"/>
</dbReference>
<dbReference type="GO" id="GO:0007005">
    <property type="term" value="P:mitochondrion organization"/>
    <property type="evidence" value="ECO:0000314"/>
    <property type="project" value="MGI"/>
</dbReference>
<dbReference type="GO" id="GO:0061744">
    <property type="term" value="P:motor behavior"/>
    <property type="evidence" value="ECO:0000315"/>
    <property type="project" value="MGI"/>
</dbReference>
<dbReference type="GO" id="GO:0050995">
    <property type="term" value="P:negative regulation of lipid catabolic process"/>
    <property type="evidence" value="ECO:0000314"/>
    <property type="project" value="MGI"/>
</dbReference>
<dbReference type="GO" id="GO:0061469">
    <property type="term" value="P:regulation of type B pancreatic cell proliferation"/>
    <property type="evidence" value="ECO:0000314"/>
    <property type="project" value="MGI"/>
</dbReference>
<dbReference type="GO" id="GO:0009636">
    <property type="term" value="P:response to toxic substance"/>
    <property type="evidence" value="ECO:0000315"/>
    <property type="project" value="MGI"/>
</dbReference>
<dbReference type="CDD" id="cd20271">
    <property type="entry name" value="Complex1_LYR_FMC1"/>
    <property type="match status" value="1"/>
</dbReference>
<dbReference type="InterPro" id="IPR037667">
    <property type="entry name" value="FMC1_homologue"/>
</dbReference>
<dbReference type="PANTHER" id="PTHR31716">
    <property type="entry name" value="PROTEIN FMC1 HOMOLOG"/>
    <property type="match status" value="1"/>
</dbReference>
<dbReference type="PANTHER" id="PTHR31716:SF1">
    <property type="entry name" value="PROTEIN FMC1 HOMOLOG"/>
    <property type="match status" value="1"/>
</dbReference>
<dbReference type="Pfam" id="PF13233">
    <property type="entry name" value="Complex1_LYR_2"/>
    <property type="match status" value="1"/>
</dbReference>
<proteinExistence type="evidence at protein level"/>
<sequence length="113" mass="12695">MAALGSPARTLRGLLRELRYLNAATGRPYRDTAAYRYLVKAFRAHRVTSEKLCRAQHELHFQAATYLCLLSSIRQHVALHQEFHGKGERSVEESAGLVGLQLPRQPGGKGWEP</sequence>
<name>FMC1_MOUSE</name>
<reference key="1">
    <citation type="journal article" date="2005" name="Science">
        <title>The transcriptional landscape of the mammalian genome.</title>
        <authorList>
            <person name="Carninci P."/>
            <person name="Kasukawa T."/>
            <person name="Katayama S."/>
            <person name="Gough J."/>
            <person name="Frith M.C."/>
            <person name="Maeda N."/>
            <person name="Oyama R."/>
            <person name="Ravasi T."/>
            <person name="Lenhard B."/>
            <person name="Wells C."/>
            <person name="Kodzius R."/>
            <person name="Shimokawa K."/>
            <person name="Bajic V.B."/>
            <person name="Brenner S.E."/>
            <person name="Batalov S."/>
            <person name="Forrest A.R."/>
            <person name="Zavolan M."/>
            <person name="Davis M.J."/>
            <person name="Wilming L.G."/>
            <person name="Aidinis V."/>
            <person name="Allen J.E."/>
            <person name="Ambesi-Impiombato A."/>
            <person name="Apweiler R."/>
            <person name="Aturaliya R.N."/>
            <person name="Bailey T.L."/>
            <person name="Bansal M."/>
            <person name="Baxter L."/>
            <person name="Beisel K.W."/>
            <person name="Bersano T."/>
            <person name="Bono H."/>
            <person name="Chalk A.M."/>
            <person name="Chiu K.P."/>
            <person name="Choudhary V."/>
            <person name="Christoffels A."/>
            <person name="Clutterbuck D.R."/>
            <person name="Crowe M.L."/>
            <person name="Dalla E."/>
            <person name="Dalrymple B.P."/>
            <person name="de Bono B."/>
            <person name="Della Gatta G."/>
            <person name="di Bernardo D."/>
            <person name="Down T."/>
            <person name="Engstrom P."/>
            <person name="Fagiolini M."/>
            <person name="Faulkner G."/>
            <person name="Fletcher C.F."/>
            <person name="Fukushima T."/>
            <person name="Furuno M."/>
            <person name="Futaki S."/>
            <person name="Gariboldi M."/>
            <person name="Georgii-Hemming P."/>
            <person name="Gingeras T.R."/>
            <person name="Gojobori T."/>
            <person name="Green R.E."/>
            <person name="Gustincich S."/>
            <person name="Harbers M."/>
            <person name="Hayashi Y."/>
            <person name="Hensch T.K."/>
            <person name="Hirokawa N."/>
            <person name="Hill D."/>
            <person name="Huminiecki L."/>
            <person name="Iacono M."/>
            <person name="Ikeo K."/>
            <person name="Iwama A."/>
            <person name="Ishikawa T."/>
            <person name="Jakt M."/>
            <person name="Kanapin A."/>
            <person name="Katoh M."/>
            <person name="Kawasawa Y."/>
            <person name="Kelso J."/>
            <person name="Kitamura H."/>
            <person name="Kitano H."/>
            <person name="Kollias G."/>
            <person name="Krishnan S.P."/>
            <person name="Kruger A."/>
            <person name="Kummerfeld S.K."/>
            <person name="Kurochkin I.V."/>
            <person name="Lareau L.F."/>
            <person name="Lazarevic D."/>
            <person name="Lipovich L."/>
            <person name="Liu J."/>
            <person name="Liuni S."/>
            <person name="McWilliam S."/>
            <person name="Madan Babu M."/>
            <person name="Madera M."/>
            <person name="Marchionni L."/>
            <person name="Matsuda H."/>
            <person name="Matsuzawa S."/>
            <person name="Miki H."/>
            <person name="Mignone F."/>
            <person name="Miyake S."/>
            <person name="Morris K."/>
            <person name="Mottagui-Tabar S."/>
            <person name="Mulder N."/>
            <person name="Nakano N."/>
            <person name="Nakauchi H."/>
            <person name="Ng P."/>
            <person name="Nilsson R."/>
            <person name="Nishiguchi S."/>
            <person name="Nishikawa S."/>
            <person name="Nori F."/>
            <person name="Ohara O."/>
            <person name="Okazaki Y."/>
            <person name="Orlando V."/>
            <person name="Pang K.C."/>
            <person name="Pavan W.J."/>
            <person name="Pavesi G."/>
            <person name="Pesole G."/>
            <person name="Petrovsky N."/>
            <person name="Piazza S."/>
            <person name="Reed J."/>
            <person name="Reid J.F."/>
            <person name="Ring B.Z."/>
            <person name="Ringwald M."/>
            <person name="Rost B."/>
            <person name="Ruan Y."/>
            <person name="Salzberg S.L."/>
            <person name="Sandelin A."/>
            <person name="Schneider C."/>
            <person name="Schoenbach C."/>
            <person name="Sekiguchi K."/>
            <person name="Semple C.A."/>
            <person name="Seno S."/>
            <person name="Sessa L."/>
            <person name="Sheng Y."/>
            <person name="Shibata Y."/>
            <person name="Shimada H."/>
            <person name="Shimada K."/>
            <person name="Silva D."/>
            <person name="Sinclair B."/>
            <person name="Sperling S."/>
            <person name="Stupka E."/>
            <person name="Sugiura K."/>
            <person name="Sultana R."/>
            <person name="Takenaka Y."/>
            <person name="Taki K."/>
            <person name="Tammoja K."/>
            <person name="Tan S.L."/>
            <person name="Tang S."/>
            <person name="Taylor M.S."/>
            <person name="Tegner J."/>
            <person name="Teichmann S.A."/>
            <person name="Ueda H.R."/>
            <person name="van Nimwegen E."/>
            <person name="Verardo R."/>
            <person name="Wei C.L."/>
            <person name="Yagi K."/>
            <person name="Yamanishi H."/>
            <person name="Zabarovsky E."/>
            <person name="Zhu S."/>
            <person name="Zimmer A."/>
            <person name="Hide W."/>
            <person name="Bult C."/>
            <person name="Grimmond S.M."/>
            <person name="Teasdale R.D."/>
            <person name="Liu E.T."/>
            <person name="Brusic V."/>
            <person name="Quackenbush J."/>
            <person name="Wahlestedt C."/>
            <person name="Mattick J.S."/>
            <person name="Hume D.A."/>
            <person name="Kai C."/>
            <person name="Sasaki D."/>
            <person name="Tomaru Y."/>
            <person name="Fukuda S."/>
            <person name="Kanamori-Katayama M."/>
            <person name="Suzuki M."/>
            <person name="Aoki J."/>
            <person name="Arakawa T."/>
            <person name="Iida J."/>
            <person name="Imamura K."/>
            <person name="Itoh M."/>
            <person name="Kato T."/>
            <person name="Kawaji H."/>
            <person name="Kawagashira N."/>
            <person name="Kawashima T."/>
            <person name="Kojima M."/>
            <person name="Kondo S."/>
            <person name="Konno H."/>
            <person name="Nakano K."/>
            <person name="Ninomiya N."/>
            <person name="Nishio T."/>
            <person name="Okada M."/>
            <person name="Plessy C."/>
            <person name="Shibata K."/>
            <person name="Shiraki T."/>
            <person name="Suzuki S."/>
            <person name="Tagami M."/>
            <person name="Waki K."/>
            <person name="Watahiki A."/>
            <person name="Okamura-Oho Y."/>
            <person name="Suzuki H."/>
            <person name="Kawai J."/>
            <person name="Hayashizaki Y."/>
        </authorList>
    </citation>
    <scope>NUCLEOTIDE SEQUENCE [LARGE SCALE MRNA]</scope>
    <source>
        <strain>C57BL/6J</strain>
        <tissue>Embryo</tissue>
        <tissue>Small intestine</tissue>
        <tissue>Tongue</tissue>
    </source>
</reference>
<reference key="2">
    <citation type="journal article" date="2004" name="Genome Res.">
        <title>The status, quality, and expansion of the NIH full-length cDNA project: the Mammalian Gene Collection (MGC).</title>
        <authorList>
            <consortium name="The MGC Project Team"/>
        </authorList>
    </citation>
    <scope>NUCLEOTIDE SEQUENCE [LARGE SCALE MRNA]</scope>
    <source>
        <tissue>Brain</tissue>
    </source>
</reference>
<reference key="3">
    <citation type="journal article" date="2010" name="Cell">
        <title>A tissue-specific atlas of mouse protein phosphorylation and expression.</title>
        <authorList>
            <person name="Huttlin E.L."/>
            <person name="Jedrychowski M.P."/>
            <person name="Elias J.E."/>
            <person name="Goswami T."/>
            <person name="Rad R."/>
            <person name="Beausoleil S.A."/>
            <person name="Villen J."/>
            <person name="Haas W."/>
            <person name="Sowa M.E."/>
            <person name="Gygi S.P."/>
        </authorList>
    </citation>
    <scope>IDENTIFICATION BY MASS SPECTROMETRY [LARGE SCALE ANALYSIS]</scope>
    <source>
        <tissue>Heart</tissue>
        <tissue>Testis</tissue>
    </source>
</reference>
<organism>
    <name type="scientific">Mus musculus</name>
    <name type="common">Mouse</name>
    <dbReference type="NCBI Taxonomy" id="10090"/>
    <lineage>
        <taxon>Eukaryota</taxon>
        <taxon>Metazoa</taxon>
        <taxon>Chordata</taxon>
        <taxon>Craniata</taxon>
        <taxon>Vertebrata</taxon>
        <taxon>Euteleostomi</taxon>
        <taxon>Mammalia</taxon>
        <taxon>Eutheria</taxon>
        <taxon>Euarchontoglires</taxon>
        <taxon>Glires</taxon>
        <taxon>Rodentia</taxon>
        <taxon>Myomorpha</taxon>
        <taxon>Muroidea</taxon>
        <taxon>Muridae</taxon>
        <taxon>Murinae</taxon>
        <taxon>Mus</taxon>
        <taxon>Mus</taxon>
    </lineage>
</organism>
<evidence type="ECO:0000250" key="1">
    <source>
        <dbReference type="UniProtKB" id="Q96HJ9"/>
    </source>
</evidence>
<evidence type="ECO:0000256" key="2">
    <source>
        <dbReference type="SAM" id="MobiDB-lite"/>
    </source>
</evidence>
<evidence type="ECO:0000305" key="3"/>
<evidence type="ECO:0000312" key="4">
    <source>
        <dbReference type="MGI" id="MGI:1913367"/>
    </source>
</evidence>
<feature type="chain" id="PRO_0000328781" description="Protein FMC1 homolog">
    <location>
        <begin position="1"/>
        <end position="113"/>
    </location>
</feature>
<feature type="region of interest" description="Disordered" evidence="2">
    <location>
        <begin position="90"/>
        <end position="113"/>
    </location>
</feature>
<accession>Q9CR13</accession>
<keyword id="KW-0496">Mitochondrion</keyword>
<keyword id="KW-1185">Reference proteome</keyword>
<comment type="function">
    <text evidence="1">Plays a role in the assembly/stability of the mitochondrial membrane ATP synthase (F(1)F(0) ATP synthase or Complex V).</text>
</comment>
<comment type="subunit">
    <text evidence="1">Interacts with ATPAF2.</text>
</comment>
<comment type="subcellular location">
    <subcellularLocation>
        <location evidence="1">Mitochondrion</location>
    </subcellularLocation>
</comment>
<comment type="similarity">
    <text evidence="3">Belongs to the FMC1 family.</text>
</comment>